<dbReference type="EMBL" id="M59914">
    <property type="protein sequence ID" value="AAA62792.1"/>
    <property type="molecule type" value="Genomic_DNA"/>
</dbReference>
<dbReference type="EMBL" id="L10328">
    <property type="protein sequence ID" value="AAA62060.1"/>
    <property type="molecule type" value="Genomic_DNA"/>
</dbReference>
<dbReference type="EMBL" id="U00096">
    <property type="protein sequence ID" value="AAC76732.1"/>
    <property type="molecule type" value="Genomic_DNA"/>
</dbReference>
<dbReference type="EMBL" id="AP009048">
    <property type="protein sequence ID" value="BAE77581.1"/>
    <property type="status" value="ALT_SEQ"/>
    <property type="molecule type" value="Genomic_DNA"/>
</dbReference>
<dbReference type="EMBL" id="AP009048">
    <property type="protein sequence ID" value="BAE77583.1"/>
    <property type="status" value="ALT_SEQ"/>
    <property type="molecule type" value="Genomic_DNA"/>
</dbReference>
<dbReference type="EMBL" id="K00032">
    <property type="protein sequence ID" value="AAA24677.1"/>
    <property type="molecule type" value="Genomic_DNA"/>
</dbReference>
<dbReference type="PIR" id="A39412">
    <property type="entry name" value="A39412"/>
</dbReference>
<dbReference type="RefSeq" id="NP_418165.1">
    <property type="nucleotide sequence ID" value="NC_000913.3"/>
</dbReference>
<dbReference type="RefSeq" id="WP_000131925.1">
    <property type="nucleotide sequence ID" value="NZ_LN832404.1"/>
</dbReference>
<dbReference type="SMR" id="P23173"/>
<dbReference type="FunCoup" id="P23173">
    <property type="interactions" value="216"/>
</dbReference>
<dbReference type="STRING" id="511145.b3709"/>
<dbReference type="TCDB" id="2.A.42.1.3">
    <property type="family name" value="the hydroxy/aromatic amino acid permease (haaap) family"/>
</dbReference>
<dbReference type="jPOST" id="P23173"/>
<dbReference type="PaxDb" id="511145-b3709"/>
<dbReference type="EnsemblBacteria" id="AAC76732">
    <property type="protein sequence ID" value="AAC76732"/>
    <property type="gene ID" value="b3709"/>
</dbReference>
<dbReference type="GeneID" id="948220"/>
<dbReference type="KEGG" id="ecj:JW5619"/>
<dbReference type="KEGG" id="ecj:JW5622"/>
<dbReference type="KEGG" id="eco:b3709"/>
<dbReference type="KEGG" id="ecoc:C3026_20110"/>
<dbReference type="PATRIC" id="fig|1411691.4.peg.2992"/>
<dbReference type="EchoBASE" id="EB0999"/>
<dbReference type="eggNOG" id="COG0814">
    <property type="taxonomic scope" value="Bacteria"/>
</dbReference>
<dbReference type="HOGENOM" id="CLU_1956281_0_0_6"/>
<dbReference type="InParanoid" id="P23173"/>
<dbReference type="OMA" id="FAYVSHM"/>
<dbReference type="OrthoDB" id="18749at2"/>
<dbReference type="PhylomeDB" id="P23173"/>
<dbReference type="BioCyc" id="EcoCyc:TNAB-MONOMER"/>
<dbReference type="BioCyc" id="MetaCyc:TNAB-MONOMER"/>
<dbReference type="PRO" id="PR:P23173"/>
<dbReference type="Proteomes" id="UP000000625">
    <property type="component" value="Chromosome"/>
</dbReference>
<dbReference type="GO" id="GO:0005886">
    <property type="term" value="C:plasma membrane"/>
    <property type="evidence" value="ECO:0000314"/>
    <property type="project" value="EcoCyc"/>
</dbReference>
<dbReference type="GO" id="GO:0015173">
    <property type="term" value="F:aromatic amino acid transmembrane transporter activity"/>
    <property type="evidence" value="ECO:0007669"/>
    <property type="project" value="InterPro"/>
</dbReference>
<dbReference type="GO" id="GO:0015293">
    <property type="term" value="F:symporter activity"/>
    <property type="evidence" value="ECO:0000315"/>
    <property type="project" value="EcoCyc"/>
</dbReference>
<dbReference type="GO" id="GO:0022857">
    <property type="term" value="F:transmembrane transporter activity"/>
    <property type="evidence" value="ECO:0000318"/>
    <property type="project" value="GO_Central"/>
</dbReference>
<dbReference type="GO" id="GO:0003333">
    <property type="term" value="P:amino acid transmembrane transport"/>
    <property type="evidence" value="ECO:0000314"/>
    <property type="project" value="EcoCyc"/>
</dbReference>
<dbReference type="GO" id="GO:0006569">
    <property type="term" value="P:L-tryptophan catabolic process"/>
    <property type="evidence" value="ECO:0007669"/>
    <property type="project" value="UniProtKB-KW"/>
</dbReference>
<dbReference type="FunFam" id="1.20.1740.10:FF:000019">
    <property type="entry name" value="Tryptophan permease TnaB"/>
    <property type="match status" value="1"/>
</dbReference>
<dbReference type="Gene3D" id="1.20.1740.10">
    <property type="entry name" value="Amino acid/polyamine transporter I"/>
    <property type="match status" value="1"/>
</dbReference>
<dbReference type="InterPro" id="IPR018227">
    <property type="entry name" value="Amino_acid_transport_2"/>
</dbReference>
<dbReference type="InterPro" id="IPR013061">
    <property type="entry name" value="Trp/try_permease_CS"/>
</dbReference>
<dbReference type="InterPro" id="IPR013059">
    <property type="entry name" value="Trp_tyr_transpt"/>
</dbReference>
<dbReference type="NCBIfam" id="TIGR00837">
    <property type="entry name" value="araaP"/>
    <property type="match status" value="1"/>
</dbReference>
<dbReference type="NCBIfam" id="NF007235">
    <property type="entry name" value="PRK09664.1"/>
    <property type="match status" value="1"/>
</dbReference>
<dbReference type="PANTHER" id="PTHR46997">
    <property type="entry name" value="LOW AFFINITY TRYPTOPHAN PERMEASE-RELATED"/>
    <property type="match status" value="1"/>
</dbReference>
<dbReference type="PANTHER" id="PTHR46997:SF1">
    <property type="entry name" value="LOW AFFINITY TRYPTOPHAN PERMEASE-RELATED"/>
    <property type="match status" value="1"/>
</dbReference>
<dbReference type="Pfam" id="PF03222">
    <property type="entry name" value="Trp_Tyr_perm"/>
    <property type="match status" value="1"/>
</dbReference>
<dbReference type="PRINTS" id="PR00166">
    <property type="entry name" value="AROAAPRMEASE"/>
</dbReference>
<dbReference type="PROSITE" id="PS00594">
    <property type="entry name" value="AROMATIC_AA_PERMEASE_1"/>
    <property type="match status" value="1"/>
</dbReference>
<comment type="function">
    <text>Involved in tryptophan transport across the cytoplasmic membrane. Plays a role in transporting tryptophan which is to be used catabolically.</text>
</comment>
<comment type="subcellular location">
    <subcellularLocation>
        <location>Cell inner membrane</location>
        <topology>Multi-pass membrane protein</topology>
    </subcellularLocation>
</comment>
<comment type="induction">
    <text>By tryptophan. Is subject to catabolic repression.</text>
</comment>
<comment type="similarity">
    <text evidence="2">Belongs to the amino acid/polyamine transporter 2 family. Mtr/TnaB/TyrP permease subfamily.</text>
</comment>
<comment type="caution">
    <text evidence="2">In strain W3110, the sequence is interrupted by the insertion of an IS5 element between positions 291 and 292.</text>
</comment>
<feature type="chain" id="PRO_0000093800" description="Low affinity tryptophan permease">
    <location>
        <begin position="1"/>
        <end position="415"/>
    </location>
</feature>
<feature type="topological domain" description="Cytoplasmic" evidence="1">
    <location>
        <begin position="1"/>
        <end position="11"/>
    </location>
</feature>
<feature type="transmembrane region" description="Helical" evidence="1">
    <location>
        <begin position="12"/>
        <end position="32"/>
    </location>
</feature>
<feature type="topological domain" description="Periplasmic" evidence="1">
    <location>
        <position position="33"/>
    </location>
</feature>
<feature type="transmembrane region" description="Helical" evidence="1">
    <location>
        <begin position="34"/>
        <end position="54"/>
    </location>
</feature>
<feature type="topological domain" description="Cytoplasmic" evidence="1">
    <location>
        <begin position="55"/>
        <end position="86"/>
    </location>
</feature>
<feature type="transmembrane region" description="Helical" evidence="1">
    <location>
        <begin position="87"/>
        <end position="107"/>
    </location>
</feature>
<feature type="topological domain" description="Periplasmic" evidence="1">
    <location>
        <begin position="108"/>
        <end position="127"/>
    </location>
</feature>
<feature type="transmembrane region" description="Helical" evidence="1">
    <location>
        <begin position="128"/>
        <end position="148"/>
    </location>
</feature>
<feature type="topological domain" description="Cytoplasmic" evidence="1">
    <location>
        <begin position="149"/>
        <end position="153"/>
    </location>
</feature>
<feature type="transmembrane region" description="Helical" evidence="1">
    <location>
        <begin position="154"/>
        <end position="174"/>
    </location>
</feature>
<feature type="topological domain" description="Periplasmic" evidence="1">
    <location>
        <begin position="175"/>
        <end position="191"/>
    </location>
</feature>
<feature type="transmembrane region" description="Helical" evidence="1">
    <location>
        <begin position="192"/>
        <end position="212"/>
    </location>
</feature>
<feature type="topological domain" description="Cytoplasmic" evidence="1">
    <location>
        <begin position="213"/>
        <end position="229"/>
    </location>
</feature>
<feature type="transmembrane region" description="Helical" evidence="1">
    <location>
        <begin position="230"/>
        <end position="250"/>
    </location>
</feature>
<feature type="topological domain" description="Periplasmic" evidence="1">
    <location>
        <begin position="251"/>
        <end position="286"/>
    </location>
</feature>
<feature type="transmembrane region" description="Helical" evidence="1">
    <location>
        <begin position="287"/>
        <end position="307"/>
    </location>
</feature>
<feature type="topological domain" description="Cytoplasmic" evidence="1">
    <location>
        <begin position="308"/>
        <end position="326"/>
    </location>
</feature>
<feature type="transmembrane region" description="Helical" evidence="1">
    <location>
        <begin position="327"/>
        <end position="347"/>
    </location>
</feature>
<feature type="topological domain" description="Periplasmic" evidence="1">
    <location>
        <position position="348"/>
    </location>
</feature>
<feature type="transmembrane region" description="Helical" evidence="1">
    <location>
        <begin position="349"/>
        <end position="369"/>
    </location>
</feature>
<feature type="topological domain" description="Cytoplasmic" evidence="1">
    <location>
        <begin position="370"/>
        <end position="387"/>
    </location>
</feature>
<feature type="transmembrane region" description="Helical" evidence="1">
    <location>
        <begin position="388"/>
        <end position="408"/>
    </location>
</feature>
<feature type="topological domain" description="Periplasmic" evidence="1">
    <location>
        <begin position="409"/>
        <end position="415"/>
    </location>
</feature>
<feature type="sequence conflict" description="In Ref. 5; AAA24677." evidence="2" ref="5">
    <original>D</original>
    <variation>V</variation>
    <location>
        <position position="3"/>
    </location>
</feature>
<reference key="1">
    <citation type="journal article" date="1991" name="J. Bacteriol.">
        <title>A new family of integral membrane proteins involved in transport of aromatic amino acids in Escherichia coli.</title>
        <authorList>
            <person name="Sarsero J.P."/>
            <person name="Wookey P.J."/>
            <person name="Gollnick P.D."/>
            <person name="Yanofsky C."/>
            <person name="Pittard A.J."/>
        </authorList>
    </citation>
    <scope>NUCLEOTIDE SEQUENCE [GENOMIC DNA]</scope>
    <source>
        <strain>K12</strain>
    </source>
</reference>
<reference key="2">
    <citation type="journal article" date="1993" name="Genomics">
        <title>DNA sequence and analysis of 136 kilobases of the Escherichia coli genome: organizational symmetry around the origin of replication.</title>
        <authorList>
            <person name="Burland V.D."/>
            <person name="Plunkett G. III"/>
            <person name="Daniels D.L."/>
            <person name="Blattner F.R."/>
        </authorList>
    </citation>
    <scope>NUCLEOTIDE SEQUENCE [LARGE SCALE GENOMIC DNA]</scope>
    <source>
        <strain>K12 / MG1655 / ATCC 47076</strain>
    </source>
</reference>
<reference key="3">
    <citation type="journal article" date="1997" name="Science">
        <title>The complete genome sequence of Escherichia coli K-12.</title>
        <authorList>
            <person name="Blattner F.R."/>
            <person name="Plunkett G. III"/>
            <person name="Bloch C.A."/>
            <person name="Perna N.T."/>
            <person name="Burland V."/>
            <person name="Riley M."/>
            <person name="Collado-Vides J."/>
            <person name="Glasner J.D."/>
            <person name="Rode C.K."/>
            <person name="Mayhew G.F."/>
            <person name="Gregor J."/>
            <person name="Davis N.W."/>
            <person name="Kirkpatrick H.A."/>
            <person name="Goeden M.A."/>
            <person name="Rose D.J."/>
            <person name="Mau B."/>
            <person name="Shao Y."/>
        </authorList>
    </citation>
    <scope>NUCLEOTIDE SEQUENCE [LARGE SCALE GENOMIC DNA]</scope>
    <source>
        <strain>K12 / MG1655 / ATCC 47076</strain>
    </source>
</reference>
<reference key="4">
    <citation type="journal article" date="2006" name="Mol. Syst. Biol.">
        <title>Highly accurate genome sequences of Escherichia coli K-12 strains MG1655 and W3110.</title>
        <authorList>
            <person name="Hayashi K."/>
            <person name="Morooka N."/>
            <person name="Yamamoto Y."/>
            <person name="Fujita K."/>
            <person name="Isono K."/>
            <person name="Choi S."/>
            <person name="Ohtsubo E."/>
            <person name="Baba T."/>
            <person name="Wanner B.L."/>
            <person name="Mori H."/>
            <person name="Horiuchi T."/>
        </authorList>
    </citation>
    <scope>NUCLEOTIDE SEQUENCE [LARGE SCALE GENOMIC DNA]</scope>
    <source>
        <strain>K12 / W3110 / ATCC 27325 / DSM 5911</strain>
    </source>
</reference>
<reference key="5">
    <citation type="journal article" date="1981" name="J. Bacteriol.">
        <title>Nucleotide sequence of the structural gene for tryptophanase of Escherichia coli K-12.</title>
        <authorList>
            <person name="Deeley M.C."/>
            <person name="Yanofsky C."/>
        </authorList>
    </citation>
    <scope>NUCLEOTIDE SEQUENCE [GENOMIC DNA] OF 1-13</scope>
    <source>
        <strain>K12</strain>
    </source>
</reference>
<reference key="6">
    <citation type="journal article" date="2005" name="Science">
        <title>Global topology analysis of the Escherichia coli inner membrane proteome.</title>
        <authorList>
            <person name="Daley D.O."/>
            <person name="Rapp M."/>
            <person name="Granseth E."/>
            <person name="Melen K."/>
            <person name="Drew D."/>
            <person name="von Heijne G."/>
        </authorList>
    </citation>
    <scope>TOPOLOGY [LARGE SCALE ANALYSIS]</scope>
    <source>
        <strain>K12 / MG1655 / ATCC 47076</strain>
    </source>
</reference>
<keyword id="KW-0029">Amino-acid transport</keyword>
<keyword id="KW-0997">Cell inner membrane</keyword>
<keyword id="KW-1003">Cell membrane</keyword>
<keyword id="KW-0472">Membrane</keyword>
<keyword id="KW-1185">Reference proteome</keyword>
<keyword id="KW-0812">Transmembrane</keyword>
<keyword id="KW-1133">Transmembrane helix</keyword>
<keyword id="KW-0813">Transport</keyword>
<keyword id="KW-0823">Tryptophan catabolism</keyword>
<proteinExistence type="evidence at protein level"/>
<gene>
    <name type="primary">tnaB</name>
    <name type="synonym">trpP</name>
    <name type="ordered locus">b3709</name>
    <name type="ordered locus">JW5619/JW5622</name>
</gene>
<evidence type="ECO:0000255" key="1"/>
<evidence type="ECO:0000305" key="2"/>
<name>TNAB_ECOLI</name>
<accession>P23173</accession>
<accession>Q2M823</accession>
<accession>Q2M825</accession>
<organism>
    <name type="scientific">Escherichia coli (strain K12)</name>
    <dbReference type="NCBI Taxonomy" id="83333"/>
    <lineage>
        <taxon>Bacteria</taxon>
        <taxon>Pseudomonadati</taxon>
        <taxon>Pseudomonadota</taxon>
        <taxon>Gammaproteobacteria</taxon>
        <taxon>Enterobacterales</taxon>
        <taxon>Enterobacteriaceae</taxon>
        <taxon>Escherichia</taxon>
    </lineage>
</organism>
<protein>
    <recommendedName>
        <fullName>Low affinity tryptophan permease</fullName>
    </recommendedName>
</protein>
<sequence length="415" mass="45211">MTDQAEKKHSAFWGVMVIAGTVIGGGMFALPVDLAGAWFFWGAFILIIAWFSMLHSGLLLLEANLNYPVGSSFNTITKDLIGNTWNIISGITVAFVLYILTYAYISANGAIISETISMNLGYHANPRIVGICTAIFVASVLWLSSLAASRITSLFLGLKIISFVIVFGSFFFQVDYSILRDATSSTAGTSYFPYIFMALPVCLASFGFHGNIPSLIICYGKRKDKLIKSVVFGSLLALVIYLFWLYCTMGNIPRESFKAIISSGGNVDSLVKSFLGTKQHGIIEFCLLVFSNLAVASSFFGVTLGLFDYLADLFKIDNSHGGRFKTVLLTFLPPALLYLIFPNGFIYGIGGAGLCATIWAVIIPAVLAIKARKKFPNQMFTVWGGNLIPAIVILFGITVILCWFGNVFNVLPKFG</sequence>